<proteinExistence type="inferred from homology"/>
<keyword id="KW-0072">Autophagy</keyword>
<keyword id="KW-0967">Endosome</keyword>
<keyword id="KW-0472">Membrane</keyword>
<keyword id="KW-0653">Protein transport</keyword>
<keyword id="KW-1185">Reference proteome</keyword>
<keyword id="KW-0813">Transport</keyword>
<keyword id="KW-0926">Vacuole</keyword>
<feature type="chain" id="PRO_0000278866" description="Vacuolar fusion protein MON1">
    <location>
        <begin position="1"/>
        <end position="887"/>
    </location>
</feature>
<feature type="region of interest" description="Disordered" evidence="3">
    <location>
        <begin position="67"/>
        <end position="150"/>
    </location>
</feature>
<feature type="region of interest" description="Disordered" evidence="3">
    <location>
        <begin position="191"/>
        <end position="280"/>
    </location>
</feature>
<feature type="region of interest" description="Disordered" evidence="3">
    <location>
        <begin position="298"/>
        <end position="338"/>
    </location>
</feature>
<feature type="region of interest" description="Disordered" evidence="3">
    <location>
        <begin position="784"/>
        <end position="806"/>
    </location>
</feature>
<feature type="compositionally biased region" description="Low complexity" evidence="3">
    <location>
        <begin position="71"/>
        <end position="80"/>
    </location>
</feature>
<feature type="compositionally biased region" description="Polar residues" evidence="3">
    <location>
        <begin position="81"/>
        <end position="95"/>
    </location>
</feature>
<feature type="compositionally biased region" description="Basic and acidic residues" evidence="3">
    <location>
        <begin position="254"/>
        <end position="265"/>
    </location>
</feature>
<feature type="compositionally biased region" description="Basic residues" evidence="3">
    <location>
        <begin position="301"/>
        <end position="315"/>
    </location>
</feature>
<feature type="compositionally biased region" description="Low complexity" evidence="3">
    <location>
        <begin position="784"/>
        <end position="803"/>
    </location>
</feature>
<comment type="function">
    <text evidence="2">In complex with CCZ1, is required for multiple vacuole delivery pathways including the cytoplasm to vacuole transport (Cvt), autophagy, pexophagy and endocytosis. The MON1-CCZ1 complex acts at the fusion of vesicles with the vacuole, through its regulation of the SNARE complex during the coordinated priming and docking stages of fusion, and particularly at the stage of tethering/docking.</text>
</comment>
<comment type="subcellular location">
    <subcellularLocation>
        <location evidence="1">Endosome</location>
        <location evidence="1">Multivesicular body membrane</location>
        <topology evidence="1">Peripheral membrane protein</topology>
    </subcellularLocation>
    <subcellularLocation>
        <location evidence="1">Prevacuolar compartment membrane</location>
        <topology evidence="1">Peripheral membrane protein</topology>
    </subcellularLocation>
    <subcellularLocation>
        <location evidence="1">Vacuole membrane</location>
        <topology evidence="1">Peripheral membrane protein</topology>
    </subcellularLocation>
</comment>
<comment type="similarity">
    <text evidence="4">Belongs to the MON1/SAND family.</text>
</comment>
<dbReference type="EMBL" id="CM003146">
    <property type="protein sequence ID" value="KIS69048.1"/>
    <property type="molecule type" value="Genomic_DNA"/>
</dbReference>
<dbReference type="RefSeq" id="XP_011389404.1">
    <property type="nucleotide sequence ID" value="XM_011391102.1"/>
</dbReference>
<dbReference type="SMR" id="Q4PA36"/>
<dbReference type="STRING" id="237631.Q4PA36"/>
<dbReference type="EnsemblFungi" id="KIS69048">
    <property type="protein sequence ID" value="KIS69048"/>
    <property type="gene ID" value="UMAG_03027"/>
</dbReference>
<dbReference type="GeneID" id="23563614"/>
<dbReference type="KEGG" id="uma:UMAG_03027"/>
<dbReference type="VEuPathDB" id="FungiDB:UMAG_03027"/>
<dbReference type="eggNOG" id="KOG0997">
    <property type="taxonomic scope" value="Eukaryota"/>
</dbReference>
<dbReference type="HOGENOM" id="CLU_014574_2_1_1"/>
<dbReference type="InParanoid" id="Q4PA36"/>
<dbReference type="OMA" id="KSWTSAT"/>
<dbReference type="OrthoDB" id="272411at2759"/>
<dbReference type="Proteomes" id="UP000000561">
    <property type="component" value="Chromosome 7"/>
</dbReference>
<dbReference type="GO" id="GO:0000329">
    <property type="term" value="C:fungal-type vacuole membrane"/>
    <property type="evidence" value="ECO:0000318"/>
    <property type="project" value="GO_Central"/>
</dbReference>
<dbReference type="GO" id="GO:0035658">
    <property type="term" value="C:Mon1-Ccz1 complex"/>
    <property type="evidence" value="ECO:0000318"/>
    <property type="project" value="GO_Central"/>
</dbReference>
<dbReference type="GO" id="GO:0032585">
    <property type="term" value="C:multivesicular body membrane"/>
    <property type="evidence" value="ECO:0007669"/>
    <property type="project" value="UniProtKB-SubCell"/>
</dbReference>
<dbReference type="GO" id="GO:0006914">
    <property type="term" value="P:autophagy"/>
    <property type="evidence" value="ECO:0007669"/>
    <property type="project" value="UniProtKB-KW"/>
</dbReference>
<dbReference type="GO" id="GO:0006623">
    <property type="term" value="P:protein targeting to vacuole"/>
    <property type="evidence" value="ECO:0000318"/>
    <property type="project" value="GO_Central"/>
</dbReference>
<dbReference type="GO" id="GO:0016192">
    <property type="term" value="P:vesicle-mediated transport"/>
    <property type="evidence" value="ECO:0007669"/>
    <property type="project" value="InterPro"/>
</dbReference>
<dbReference type="InterPro" id="IPR043972">
    <property type="entry name" value="FUZ/MON1/HPS1_longin_1"/>
</dbReference>
<dbReference type="InterPro" id="IPR043971">
    <property type="entry name" value="FUZ/MON1/HPS1_longin_2"/>
</dbReference>
<dbReference type="InterPro" id="IPR043970">
    <property type="entry name" value="FUZ/MON1/HPS1_longin_3"/>
</dbReference>
<dbReference type="InterPro" id="IPR004353">
    <property type="entry name" value="Mon1"/>
</dbReference>
<dbReference type="PANTHER" id="PTHR13027">
    <property type="entry name" value="SAND PROTEIN-RELATED"/>
    <property type="match status" value="1"/>
</dbReference>
<dbReference type="PANTHER" id="PTHR13027:SF7">
    <property type="entry name" value="VACUOLAR FUSION PROTEIN MON1 HOMOLOG"/>
    <property type="match status" value="1"/>
</dbReference>
<dbReference type="Pfam" id="PF19036">
    <property type="entry name" value="Fuz_longin_1"/>
    <property type="match status" value="1"/>
</dbReference>
<dbReference type="Pfam" id="PF19037">
    <property type="entry name" value="Fuz_longin_2"/>
    <property type="match status" value="1"/>
</dbReference>
<dbReference type="Pfam" id="PF19038">
    <property type="entry name" value="Fuz_longin_3"/>
    <property type="match status" value="1"/>
</dbReference>
<accession>Q4PA36</accession>
<accession>A0A0D1CR66</accession>
<protein>
    <recommendedName>
        <fullName>Vacuolar fusion protein MON1</fullName>
    </recommendedName>
</protein>
<sequence>MPQAPKSLSIDSDAAVVAAAAADDLVRASSPRPRTTTFTPSRPTVLLTKSWTSATVLPSTTSTRITVGANTSTATDAASSISQHEPSTSSNSTRASTPLPELSPSPFSPQTAVAEALTREQQPAGPSDDSQSRSILPHASDHSTPCNSDQATEVAFHDAADVEPEAVGTTVSSSIHALDLLHRVNDRAAAERASNSESLRSHLSRLSVSRASSKHRSRSNSRDASTQTRALPPAFLGTKQAAPSAASAVTQTSLRDEAKDGDRQLYDTSSAPSHEEEQYPDRKYYILSSAGKPIYISHASLSRRKRRREKRRRQRRAESNESDLNSNESDEEDESSTTQVGVMQALISIFADEDSDKLRFIRRGDLLITFLLRAPLYLVCVSSWNEEPSTLRQHLEYLYLQVISLVSASQLTRLFGRMPNFDLRRLLEGTEGIFDYLVNQLNANETEDDDAEQGQHQVATGGVEAKRAVTDWASCHQWWLQALQPIRITVPNLRDQLTAALQPPTAEAGSSTQPHRPKDLLYVLLCANGRIVTLLRPRKHSVHPIDLLLLTNMVMGSRSIKRSGGSEDAEIWLPLSMPKFAPHGFVHAYVKFLDPESWIGSRREGSEMVGDAKMTSSELAVIVVTGDKDAFPTVSAWISSLVAQPPAHWADNTADDAGDAGDAGSIRTTDIMAKRAASKKQAGKSAKPTQTELASWMTHFQRHILTLCRHLTDASNIEQGSPRVSAYTCAELGLAGLRHFVYRSNSTIQLTSPSLPDPYASDAVHRKRLLTLYSLVHHQIHHPLPASASHSESSSSSTTAPPTGMLNGVFGTPASSHPRLSADTRLKMHLVKSHHEQILGWITSPFELYLCLNPQLSKSAIVAVANSLTKWIKSNENDLFLVNAGSF</sequence>
<organism>
    <name type="scientific">Mycosarcoma maydis</name>
    <name type="common">Corn smut fungus</name>
    <name type="synonym">Ustilago maydis</name>
    <dbReference type="NCBI Taxonomy" id="5270"/>
    <lineage>
        <taxon>Eukaryota</taxon>
        <taxon>Fungi</taxon>
        <taxon>Dikarya</taxon>
        <taxon>Basidiomycota</taxon>
        <taxon>Ustilaginomycotina</taxon>
        <taxon>Ustilaginomycetes</taxon>
        <taxon>Ustilaginales</taxon>
        <taxon>Ustilaginaceae</taxon>
        <taxon>Mycosarcoma</taxon>
    </lineage>
</organism>
<gene>
    <name type="primary">MON1</name>
    <name type="ORF">UMAG_03027</name>
</gene>
<name>MON1_MYCMD</name>
<evidence type="ECO:0000250" key="1"/>
<evidence type="ECO:0000250" key="2">
    <source>
        <dbReference type="UniProtKB" id="P53129"/>
    </source>
</evidence>
<evidence type="ECO:0000256" key="3">
    <source>
        <dbReference type="SAM" id="MobiDB-lite"/>
    </source>
</evidence>
<evidence type="ECO:0000305" key="4"/>
<reference key="1">
    <citation type="journal article" date="2006" name="Nature">
        <title>Insights from the genome of the biotrophic fungal plant pathogen Ustilago maydis.</title>
        <authorList>
            <person name="Kaemper J."/>
            <person name="Kahmann R."/>
            <person name="Boelker M."/>
            <person name="Ma L.-J."/>
            <person name="Brefort T."/>
            <person name="Saville B.J."/>
            <person name="Banuett F."/>
            <person name="Kronstad J.W."/>
            <person name="Gold S.E."/>
            <person name="Mueller O."/>
            <person name="Perlin M.H."/>
            <person name="Woesten H.A.B."/>
            <person name="de Vries R."/>
            <person name="Ruiz-Herrera J."/>
            <person name="Reynaga-Pena C.G."/>
            <person name="Snetselaar K."/>
            <person name="McCann M."/>
            <person name="Perez-Martin J."/>
            <person name="Feldbruegge M."/>
            <person name="Basse C.W."/>
            <person name="Steinberg G."/>
            <person name="Ibeas J.I."/>
            <person name="Holloman W."/>
            <person name="Guzman P."/>
            <person name="Farman M.L."/>
            <person name="Stajich J.E."/>
            <person name="Sentandreu R."/>
            <person name="Gonzalez-Prieto J.M."/>
            <person name="Kennell J.C."/>
            <person name="Molina L."/>
            <person name="Schirawski J."/>
            <person name="Mendoza-Mendoza A."/>
            <person name="Greilinger D."/>
            <person name="Muench K."/>
            <person name="Roessel N."/>
            <person name="Scherer M."/>
            <person name="Vranes M."/>
            <person name="Ladendorf O."/>
            <person name="Vincon V."/>
            <person name="Fuchs U."/>
            <person name="Sandrock B."/>
            <person name="Meng S."/>
            <person name="Ho E.C.H."/>
            <person name="Cahill M.J."/>
            <person name="Boyce K.J."/>
            <person name="Klose J."/>
            <person name="Klosterman S.J."/>
            <person name="Deelstra H.J."/>
            <person name="Ortiz-Castellanos L."/>
            <person name="Li W."/>
            <person name="Sanchez-Alonso P."/>
            <person name="Schreier P.H."/>
            <person name="Haeuser-Hahn I."/>
            <person name="Vaupel M."/>
            <person name="Koopmann E."/>
            <person name="Friedrich G."/>
            <person name="Voss H."/>
            <person name="Schlueter T."/>
            <person name="Margolis J."/>
            <person name="Platt D."/>
            <person name="Swimmer C."/>
            <person name="Gnirke A."/>
            <person name="Chen F."/>
            <person name="Vysotskaia V."/>
            <person name="Mannhaupt G."/>
            <person name="Gueldener U."/>
            <person name="Muensterkoetter M."/>
            <person name="Haase D."/>
            <person name="Oesterheld M."/>
            <person name="Mewes H.-W."/>
            <person name="Mauceli E.W."/>
            <person name="DeCaprio D."/>
            <person name="Wade C.M."/>
            <person name="Butler J."/>
            <person name="Young S.K."/>
            <person name="Jaffe D.B."/>
            <person name="Calvo S.E."/>
            <person name="Nusbaum C."/>
            <person name="Galagan J.E."/>
            <person name="Birren B.W."/>
        </authorList>
    </citation>
    <scope>NUCLEOTIDE SEQUENCE [LARGE SCALE GENOMIC DNA]</scope>
    <source>
        <strain>DSM 14603 / FGSC 9021 / UM521</strain>
    </source>
</reference>
<reference key="2">
    <citation type="submission" date="2014-09" db="EMBL/GenBank/DDBJ databases">
        <authorList>
            <person name="Gueldener U."/>
            <person name="Muensterkoetter M."/>
            <person name="Walter M.C."/>
            <person name="Mannhaupt G."/>
            <person name="Kahmann R."/>
        </authorList>
    </citation>
    <scope>GENOME REANNOTATION</scope>
    <source>
        <strain>DSM 14603 / FGSC 9021 / UM521</strain>
    </source>
</reference>